<reference key="1">
    <citation type="journal article" date="2007" name="Proc. Natl. Acad. Sci. U.S.A.">
        <title>Genome sequencing and comparative analysis of Saccharomyces cerevisiae strain YJM789.</title>
        <authorList>
            <person name="Wei W."/>
            <person name="McCusker J.H."/>
            <person name="Hyman R.W."/>
            <person name="Jones T."/>
            <person name="Ning Y."/>
            <person name="Cao Z."/>
            <person name="Gu Z."/>
            <person name="Bruno D."/>
            <person name="Miranda M."/>
            <person name="Nguyen M."/>
            <person name="Wilhelmy J."/>
            <person name="Komp C."/>
            <person name="Tamse R."/>
            <person name="Wang X."/>
            <person name="Jia P."/>
            <person name="Luedi P."/>
            <person name="Oefner P.J."/>
            <person name="David L."/>
            <person name="Dietrich F.S."/>
            <person name="Li Y."/>
            <person name="Davis R.W."/>
            <person name="Steinmetz L.M."/>
        </authorList>
    </citation>
    <scope>NUCLEOTIDE SEQUENCE [LARGE SCALE GENOMIC DNA]</scope>
    <source>
        <strain>YJM789</strain>
    </source>
</reference>
<proteinExistence type="inferred from homology"/>
<organism>
    <name type="scientific">Saccharomyces cerevisiae (strain YJM789)</name>
    <name type="common">Baker's yeast</name>
    <dbReference type="NCBI Taxonomy" id="307796"/>
    <lineage>
        <taxon>Eukaryota</taxon>
        <taxon>Fungi</taxon>
        <taxon>Dikarya</taxon>
        <taxon>Ascomycota</taxon>
        <taxon>Saccharomycotina</taxon>
        <taxon>Saccharomycetes</taxon>
        <taxon>Saccharomycetales</taxon>
        <taxon>Saccharomycetaceae</taxon>
        <taxon>Saccharomyces</taxon>
    </lineage>
</organism>
<name>DEF1_YEAS7</name>
<sequence>MSTQFRKSNHNSHSSKKLNPALKSKIDTLTELFPDWTSDDLIDIVQEYDDLETIIDKITSGAVTRWDEVKKPAKKEKYEKKEQQHSYVPQQHLPNPEDDITYKSSNNSNSFTSTKHNSSNNYTQARNKKKVQTPRAHTTGKHVNLDKGKHVPSKPVSNTTSWAAAVSVDTKHDVPQDSNDNNNEELEAQGQQAQENQEKEQEEQQQQEGHNNKEEHKQIEQPSLSSKKTTSKTSAPQPKKMSWAAIATPKPKAVKKTESPLENVAELKKEISDIKKDDQKSEASEEKVNEQETSAQEQEEETAEPSEENEDRVPEVDGEEVQEEAEEKEQVKEEEQTAEELEQEQDNVAAPEEEVTVVEEKVEISAVISEPPEDQANTVPQPQQQQQQQQQQPQQPQQQQQQPQQQQQPQQPQQQLQQQQQQQQQPVQAQAQAQEEQLSQNYYTQQQQQQFAQQQHQFQQQYLSQQQQYAQQQQQHPQPQSQQPQSQQSPQSQKQGNNVAAQQYYMYQNQFPGYSYPGMFDSQGYAYGQQYQQLAQNNAQTSGNANQYNFQQGYGQAGANTAAANLTSAAAAAAASPATAHAQPQQQQPYGGSFMPYYAHFYQQSFPYGQPQYGVAGQYPYQLPKNNYNYYQTQNGQEQQSPNQGVAQHSEDSQQKQSQQQQQQQPQGQPQPEVQMQNGQSVNPQQQMQFQQYYQFQQQQQQAAAAAAAAAQQGVPYGYNGYDYNSKNSRGFY</sequence>
<protein>
    <recommendedName>
        <fullName>RNA polymerase II degradation factor 1</fullName>
    </recommendedName>
    <alternativeName>
        <fullName>RRM3-interacting protein 1</fullName>
    </alternativeName>
</protein>
<accession>A6ZZR2</accession>
<feature type="chain" id="PRO_0000405672" description="RNA polymerase II degradation factor 1">
    <location>
        <begin position="1"/>
        <end position="733"/>
    </location>
</feature>
<feature type="domain" description="CUE" evidence="2">
    <location>
        <begin position="21"/>
        <end position="63"/>
    </location>
</feature>
<feature type="region of interest" description="Disordered" evidence="3">
    <location>
        <begin position="69"/>
        <end position="446"/>
    </location>
</feature>
<feature type="region of interest" description="Disordered" evidence="3">
    <location>
        <begin position="465"/>
        <end position="498"/>
    </location>
</feature>
<feature type="region of interest" description="Contains the proteolytic activation cleavage site" evidence="1">
    <location>
        <begin position="495"/>
        <end position="525"/>
    </location>
</feature>
<feature type="region of interest" description="Disordered" evidence="3">
    <location>
        <begin position="635"/>
        <end position="682"/>
    </location>
</feature>
<feature type="compositionally biased region" description="Basic and acidic residues" evidence="3">
    <location>
        <begin position="69"/>
        <end position="84"/>
    </location>
</feature>
<feature type="compositionally biased region" description="Low complexity" evidence="3">
    <location>
        <begin position="103"/>
        <end position="121"/>
    </location>
</feature>
<feature type="compositionally biased region" description="Basic and acidic residues" evidence="3">
    <location>
        <begin position="210"/>
        <end position="219"/>
    </location>
</feature>
<feature type="compositionally biased region" description="Low complexity" evidence="3">
    <location>
        <begin position="222"/>
        <end position="240"/>
    </location>
</feature>
<feature type="compositionally biased region" description="Basic and acidic residues" evidence="3">
    <location>
        <begin position="255"/>
        <end position="290"/>
    </location>
</feature>
<feature type="compositionally biased region" description="Acidic residues" evidence="3">
    <location>
        <begin position="297"/>
        <end position="327"/>
    </location>
</feature>
<feature type="compositionally biased region" description="Acidic residues" evidence="3">
    <location>
        <begin position="336"/>
        <end position="357"/>
    </location>
</feature>
<feature type="compositionally biased region" description="Low complexity" evidence="3">
    <location>
        <begin position="380"/>
        <end position="446"/>
    </location>
</feature>
<feature type="compositionally biased region" description="Low complexity" evidence="3">
    <location>
        <begin position="465"/>
        <end position="495"/>
    </location>
</feature>
<feature type="compositionally biased region" description="Low complexity" evidence="3">
    <location>
        <begin position="655"/>
        <end position="677"/>
    </location>
</feature>
<feature type="modified residue" description="Phosphoserine" evidence="1">
    <location>
        <position position="259"/>
    </location>
</feature>
<feature type="modified residue" description="Phosphoserine" evidence="1">
    <location>
        <position position="272"/>
    </location>
</feature>
<feature type="modified residue" description="Phosphoserine" evidence="1">
    <location>
        <position position="306"/>
    </location>
</feature>
<feature type="modified residue" description="Phosphothreonine" evidence="1">
    <location>
        <position position="337"/>
    </location>
</feature>
<feature type="modified residue" description="Phosphoserine" evidence="1">
    <location>
        <position position="641"/>
    </location>
</feature>
<evidence type="ECO:0000250" key="1">
    <source>
        <dbReference type="UniProtKB" id="P35732"/>
    </source>
</evidence>
<evidence type="ECO:0000255" key="2">
    <source>
        <dbReference type="PROSITE-ProRule" id="PRU00468"/>
    </source>
</evidence>
<evidence type="ECO:0000256" key="3">
    <source>
        <dbReference type="SAM" id="MobiDB-lite"/>
    </source>
</evidence>
<evidence type="ECO:0000305" key="4"/>
<comment type="function">
    <text evidence="1">Recruits the ubiquitination machinery to RNA polymerase II for polyubiquitination, removal and degradation, when the transcription-coupled repair (TCR) factor RAD26 fails to efficiently displace stalled RNA polymerase II. Also involved in telomere length regulation. Binds DNA.</text>
</comment>
<comment type="subunit">
    <text evidence="1">Homodimer; may form higher order oligomers. Interacts with the large RNA polymerase II subunit RPO21; the interaction is direct and serves to bridge RPO21 to the Elongin complex in a manner dependent on transcription stress. Interacts with RAD26.</text>
</comment>
<comment type="subcellular location">
    <subcellularLocation>
        <location evidence="1">Cytoplasm</location>
    </subcellularLocation>
    <subcellularLocation>
        <location evidence="1">Nucleus</location>
    </subcellularLocation>
    <subcellularLocation>
        <location evidence="1">Chromosome</location>
        <location evidence="1">Telomere</location>
    </subcellularLocation>
    <text evidence="1">During transcription stress, localizes to the nucleus following proteolytic cleavage by the proteasome.</text>
</comment>
<comment type="PTM">
    <text evidence="1">Ubiquitinated.</text>
</comment>
<comment type="PTM">
    <text evidence="1">Proteolytically cleaved by the proteasome in response to transcription stress; the resulting N-terminal form constitutes the activated nuclear form and the C-terminal portion is degraded.</text>
</comment>
<comment type="similarity">
    <text evidence="4">Belongs to the DEF1 family.</text>
</comment>
<gene>
    <name type="primary">DEF1</name>
    <name type="synonym">RIP1</name>
    <name type="synonym">VID31</name>
</gene>
<dbReference type="EMBL" id="AAFW02000152">
    <property type="protein sequence ID" value="EDN59855.1"/>
    <property type="molecule type" value="Genomic_DNA"/>
</dbReference>
<dbReference type="HOGENOM" id="CLU_023119_0_0_1"/>
<dbReference type="OrthoDB" id="41686at4893"/>
<dbReference type="Proteomes" id="UP000007060">
    <property type="component" value="Unassembled WGS sequence"/>
</dbReference>
<dbReference type="GO" id="GO:0000781">
    <property type="term" value="C:chromosome, telomeric region"/>
    <property type="evidence" value="ECO:0007669"/>
    <property type="project" value="UniProtKB-SubCell"/>
</dbReference>
<dbReference type="GO" id="GO:0005737">
    <property type="term" value="C:cytoplasm"/>
    <property type="evidence" value="ECO:0007669"/>
    <property type="project" value="UniProtKB-SubCell"/>
</dbReference>
<dbReference type="GO" id="GO:0005634">
    <property type="term" value="C:nucleus"/>
    <property type="evidence" value="ECO:0007669"/>
    <property type="project" value="UniProtKB-SubCell"/>
</dbReference>
<dbReference type="GO" id="GO:0003677">
    <property type="term" value="F:DNA binding"/>
    <property type="evidence" value="ECO:0007669"/>
    <property type="project" value="UniProtKB-KW"/>
</dbReference>
<dbReference type="GO" id="GO:0043130">
    <property type="term" value="F:ubiquitin binding"/>
    <property type="evidence" value="ECO:0007669"/>
    <property type="project" value="InterPro"/>
</dbReference>
<dbReference type="GO" id="GO:0006281">
    <property type="term" value="P:DNA repair"/>
    <property type="evidence" value="ECO:0007669"/>
    <property type="project" value="UniProtKB-KW"/>
</dbReference>
<dbReference type="CDD" id="cd14368">
    <property type="entry name" value="CUE_DEF1_like"/>
    <property type="match status" value="1"/>
</dbReference>
<dbReference type="InterPro" id="IPR003892">
    <property type="entry name" value="CUE"/>
</dbReference>
<dbReference type="InterPro" id="IPR041803">
    <property type="entry name" value="DEF1_CUE"/>
</dbReference>
<dbReference type="PROSITE" id="PS51140">
    <property type="entry name" value="CUE"/>
    <property type="match status" value="1"/>
</dbReference>
<keyword id="KW-0158">Chromosome</keyword>
<keyword id="KW-0963">Cytoplasm</keyword>
<keyword id="KW-0227">DNA damage</keyword>
<keyword id="KW-0234">DNA repair</keyword>
<keyword id="KW-0238">DNA-binding</keyword>
<keyword id="KW-0539">Nucleus</keyword>
<keyword id="KW-0597">Phosphoprotein</keyword>
<keyword id="KW-0779">Telomere</keyword>
<keyword id="KW-0832">Ubl conjugation</keyword>
<keyword id="KW-0833">Ubl conjugation pathway</keyword>